<keyword id="KW-0326">Glycosidase</keyword>
<keyword id="KW-0378">Hydrolase</keyword>
<keyword id="KW-0611">Plant defense</keyword>
<keyword id="KW-0732">Signal</keyword>
<sequence length="321" mass="33344">LAGVEGIGVNYGMMGSDLPSPDKVVALYKANNITDVRIFHPDTNVLEALRNSGLGVVLGTLNSDLAPLASDASYAASWVHSYVQPFAGAVSFRYINAGNEVIPGESAALVLPAMKNLEAALQAAGLSVPVTTAMATSVLGTSYPPSQGTFSEAALPTVGPIVSHLASSGTPLLVNVYPYFAYSADPSSVRLDYALLSSSAAVAVTDNGVEYANMFDAILDAVYAAVEKAGGGESLELVVSETGWPSGGGGYGASVENAAAYINNLVRHVGGTPRRPGKAVETYIFAMFNENQKPEGVEQNFGMFQPDMSQVYHVDFTASSS</sequence>
<protein>
    <recommendedName>
        <fullName>Putative glucan endo-1,3-beta-glucosidase GVI</fullName>
        <ecNumber>3.2.1.39</ecNumber>
    </recommendedName>
    <alternativeName>
        <fullName>(1-&gt;3)-beta-glucan endohydrolase GVI</fullName>
    </alternativeName>
    <alternativeName>
        <fullName>(1-&gt;3)-beta-glucanase isoenzyme GVI</fullName>
    </alternativeName>
    <alternativeName>
        <fullName>Beta-1,3-endoglucanase GVI</fullName>
    </alternativeName>
</protein>
<proteinExistence type="inferred from homology"/>
<name>E13F_HORVU</name>
<organism>
    <name type="scientific">Hordeum vulgare</name>
    <name type="common">Barley</name>
    <dbReference type="NCBI Taxonomy" id="4513"/>
    <lineage>
        <taxon>Eukaryota</taxon>
        <taxon>Viridiplantae</taxon>
        <taxon>Streptophyta</taxon>
        <taxon>Embryophyta</taxon>
        <taxon>Tracheophyta</taxon>
        <taxon>Spermatophyta</taxon>
        <taxon>Magnoliopsida</taxon>
        <taxon>Liliopsida</taxon>
        <taxon>Poales</taxon>
        <taxon>Poaceae</taxon>
        <taxon>BOP clade</taxon>
        <taxon>Pooideae</taxon>
        <taxon>Triticodae</taxon>
        <taxon>Triticeae</taxon>
        <taxon>Hordeinae</taxon>
        <taxon>Hordeum</taxon>
    </lineage>
</organism>
<dbReference type="EC" id="3.2.1.39"/>
<dbReference type="EMBL" id="M96941">
    <property type="protein sequence ID" value="AAA32957.1"/>
    <property type="molecule type" value="Genomic_DNA"/>
</dbReference>
<dbReference type="PIR" id="JC1439">
    <property type="entry name" value="JC1439"/>
</dbReference>
<dbReference type="SMR" id="Q02439"/>
<dbReference type="CAZy" id="GH17">
    <property type="family name" value="Glycoside Hydrolase Family 17"/>
</dbReference>
<dbReference type="ExpressionAtlas" id="Q02439">
    <property type="expression patterns" value="differential"/>
</dbReference>
<dbReference type="GO" id="GO:0042973">
    <property type="term" value="F:glucan endo-1,3-beta-D-glucosidase activity"/>
    <property type="evidence" value="ECO:0007669"/>
    <property type="project" value="UniProtKB-EC"/>
</dbReference>
<dbReference type="GO" id="GO:0005975">
    <property type="term" value="P:carbohydrate metabolic process"/>
    <property type="evidence" value="ECO:0007669"/>
    <property type="project" value="InterPro"/>
</dbReference>
<dbReference type="GO" id="GO:0006952">
    <property type="term" value="P:defense response"/>
    <property type="evidence" value="ECO:0007669"/>
    <property type="project" value="UniProtKB-KW"/>
</dbReference>
<dbReference type="FunFam" id="3.20.20.80:FF:000010">
    <property type="entry name" value="glucan endo-1,3-beta-glucosidase, basic"/>
    <property type="match status" value="1"/>
</dbReference>
<dbReference type="Gene3D" id="3.20.20.80">
    <property type="entry name" value="Glycosidases"/>
    <property type="match status" value="1"/>
</dbReference>
<dbReference type="InterPro" id="IPR000490">
    <property type="entry name" value="Glyco_hydro_17"/>
</dbReference>
<dbReference type="InterPro" id="IPR044965">
    <property type="entry name" value="Glyco_hydro_17_plant"/>
</dbReference>
<dbReference type="InterPro" id="IPR017853">
    <property type="entry name" value="Glycoside_hydrolase_SF"/>
</dbReference>
<dbReference type="PANTHER" id="PTHR32227">
    <property type="entry name" value="GLUCAN ENDO-1,3-BETA-GLUCOSIDASE BG1-RELATED-RELATED"/>
    <property type="match status" value="1"/>
</dbReference>
<dbReference type="Pfam" id="PF00332">
    <property type="entry name" value="Glyco_hydro_17"/>
    <property type="match status" value="1"/>
</dbReference>
<dbReference type="SUPFAM" id="SSF51445">
    <property type="entry name" value="(Trans)glycosidases"/>
    <property type="match status" value="1"/>
</dbReference>
<dbReference type="PROSITE" id="PS00587">
    <property type="entry name" value="GLYCOSYL_HYDROL_F17"/>
    <property type="match status" value="1"/>
</dbReference>
<accession>Q02439</accession>
<feature type="signal peptide" evidence="1">
    <location>
        <begin position="1" status="less than"/>
        <end position="6"/>
    </location>
</feature>
<feature type="chain" id="PRO_0000011850" description="Putative glucan endo-1,3-beta-glucosidase GVI">
    <location>
        <begin position="7"/>
        <end position="321"/>
    </location>
</feature>
<feature type="active site" description="Proton donor" evidence="2">
    <location>
        <position position="100"/>
    </location>
</feature>
<feature type="active site" description="Nucleophile" evidence="2">
    <location>
        <position position="241"/>
    </location>
</feature>
<feature type="non-terminal residue">
    <location>
        <position position="1"/>
    </location>
</feature>
<evidence type="ECO:0000250" key="1"/>
<evidence type="ECO:0000250" key="2">
    <source>
        <dbReference type="UniProtKB" id="O22317"/>
    </source>
</evidence>
<evidence type="ECO:0000305" key="3"/>
<reference key="1">
    <citation type="journal article" date="1992" name="Gene">
        <title>Evolution and differential expression of the (1--&gt;3)-beta-glucan endohydrolase-encoding gene family in barley, Hordeum vulgare.</title>
        <authorList>
            <person name="Xu P."/>
            <person name="Wang J."/>
            <person name="Fincher G.B."/>
        </authorList>
    </citation>
    <scope>NUCLEOTIDE SEQUENCE [GENOMIC DNA]</scope>
    <source>
        <strain>cv. Clipper</strain>
        <strain>cv. NK 1558</strain>
        <tissue>Seedling</tissue>
    </source>
</reference>
<comment type="function">
    <text>May provide a degree of protection against microbial invasion of germinated barley grain through its ability to degrade fungal cell wall polysaccharides.</text>
</comment>
<comment type="catalytic activity">
    <reaction>
        <text>Hydrolysis of (1-&gt;3)-beta-D-glucosidic linkages in (1-&gt;3)-beta-D-glucans.</text>
        <dbReference type="EC" id="3.2.1.39"/>
    </reaction>
</comment>
<comment type="similarity">
    <text evidence="3">Belongs to the glycosyl hydrolase 17 family.</text>
</comment>